<proteinExistence type="inferred from homology"/>
<reference key="1">
    <citation type="journal article" date="2009" name="PLoS ONE">
        <title>Complete genome sequence of Francisella tularensis subspecies holarctica FTNF002-00.</title>
        <authorList>
            <person name="Barabote R.D."/>
            <person name="Xie G."/>
            <person name="Brettin T.S."/>
            <person name="Hinrichs S.H."/>
            <person name="Fey P.D."/>
            <person name="Jay J.J."/>
            <person name="Engle J.L."/>
            <person name="Godbole S.D."/>
            <person name="Noronha J.M."/>
            <person name="Scheuermann R.H."/>
            <person name="Zhou L.W."/>
            <person name="Lion C."/>
            <person name="Dempsey M.P."/>
        </authorList>
    </citation>
    <scope>NUCLEOTIDE SEQUENCE [LARGE SCALE GENOMIC DNA]</scope>
    <source>
        <strain>FTNF002-00 / FTA</strain>
    </source>
</reference>
<evidence type="ECO:0000255" key="1">
    <source>
        <dbReference type="HAMAP-Rule" id="MF_00260"/>
    </source>
</evidence>
<keyword id="KW-0627">Porphyrin biosynthesis</keyword>
<keyword id="KW-0808">Transferase</keyword>
<organism>
    <name type="scientific">Francisella tularensis subsp. holarctica (strain FTNF002-00 / FTA)</name>
    <dbReference type="NCBI Taxonomy" id="458234"/>
    <lineage>
        <taxon>Bacteria</taxon>
        <taxon>Pseudomonadati</taxon>
        <taxon>Pseudomonadota</taxon>
        <taxon>Gammaproteobacteria</taxon>
        <taxon>Thiotrichales</taxon>
        <taxon>Francisellaceae</taxon>
        <taxon>Francisella</taxon>
    </lineage>
</organism>
<accession>A7N9H6</accession>
<comment type="function">
    <text evidence="1">Tetrapolymerization of the monopyrrole PBG into the hydroxymethylbilane pre-uroporphyrinogen in several discrete steps.</text>
</comment>
<comment type="catalytic activity">
    <reaction evidence="1">
        <text>4 porphobilinogen + H2O = hydroxymethylbilane + 4 NH4(+)</text>
        <dbReference type="Rhea" id="RHEA:13185"/>
        <dbReference type="ChEBI" id="CHEBI:15377"/>
        <dbReference type="ChEBI" id="CHEBI:28938"/>
        <dbReference type="ChEBI" id="CHEBI:57845"/>
        <dbReference type="ChEBI" id="CHEBI:58126"/>
        <dbReference type="EC" id="2.5.1.61"/>
    </reaction>
</comment>
<comment type="cofactor">
    <cofactor evidence="1">
        <name>dipyrromethane</name>
        <dbReference type="ChEBI" id="CHEBI:60342"/>
    </cofactor>
    <text evidence="1">Binds 1 dipyrromethane group covalently.</text>
</comment>
<comment type="pathway">
    <text evidence="1">Porphyrin-containing compound metabolism; protoporphyrin-IX biosynthesis; coproporphyrinogen-III from 5-aminolevulinate: step 2/4.</text>
</comment>
<comment type="subunit">
    <text evidence="1">Monomer.</text>
</comment>
<comment type="miscellaneous">
    <text evidence="1">The porphobilinogen subunits are added to the dipyrromethane group.</text>
</comment>
<comment type="similarity">
    <text evidence="1">Belongs to the HMBS family.</text>
</comment>
<feature type="chain" id="PRO_1000047749" description="Porphobilinogen deaminase">
    <location>
        <begin position="1"/>
        <end position="300"/>
    </location>
</feature>
<feature type="modified residue" description="S-(dipyrrolylmethanemethyl)cysteine" evidence="1">
    <location>
        <position position="239"/>
    </location>
</feature>
<gene>
    <name evidence="1" type="primary">hemC</name>
    <name type="ordered locus">FTA_0152</name>
</gene>
<dbReference type="EC" id="2.5.1.61" evidence="1"/>
<dbReference type="EMBL" id="CP000803">
    <property type="protein sequence ID" value="ABU60629.1"/>
    <property type="molecule type" value="Genomic_DNA"/>
</dbReference>
<dbReference type="RefSeq" id="WP_003017764.1">
    <property type="nucleotide sequence ID" value="NC_009749.1"/>
</dbReference>
<dbReference type="SMR" id="A7N9H6"/>
<dbReference type="KEGG" id="fta:FTA_0152"/>
<dbReference type="HOGENOM" id="CLU_019704_0_2_6"/>
<dbReference type="UniPathway" id="UPA00251">
    <property type="reaction ID" value="UER00319"/>
</dbReference>
<dbReference type="GO" id="GO:0005737">
    <property type="term" value="C:cytoplasm"/>
    <property type="evidence" value="ECO:0007669"/>
    <property type="project" value="TreeGrafter"/>
</dbReference>
<dbReference type="GO" id="GO:0004418">
    <property type="term" value="F:hydroxymethylbilane synthase activity"/>
    <property type="evidence" value="ECO:0007669"/>
    <property type="project" value="UniProtKB-UniRule"/>
</dbReference>
<dbReference type="GO" id="GO:0006782">
    <property type="term" value="P:protoporphyrinogen IX biosynthetic process"/>
    <property type="evidence" value="ECO:0007669"/>
    <property type="project" value="UniProtKB-UniRule"/>
</dbReference>
<dbReference type="CDD" id="cd13646">
    <property type="entry name" value="PBP2_EcHMBS_like"/>
    <property type="match status" value="1"/>
</dbReference>
<dbReference type="FunFam" id="3.40.190.10:FF:000004">
    <property type="entry name" value="Porphobilinogen deaminase"/>
    <property type="match status" value="1"/>
</dbReference>
<dbReference type="FunFam" id="3.40.190.10:FF:000005">
    <property type="entry name" value="Porphobilinogen deaminase"/>
    <property type="match status" value="1"/>
</dbReference>
<dbReference type="Gene3D" id="3.40.190.10">
    <property type="entry name" value="Periplasmic binding protein-like II"/>
    <property type="match status" value="2"/>
</dbReference>
<dbReference type="Gene3D" id="3.30.160.40">
    <property type="entry name" value="Porphobilinogen deaminase, C-terminal domain"/>
    <property type="match status" value="1"/>
</dbReference>
<dbReference type="HAMAP" id="MF_00260">
    <property type="entry name" value="Porphobil_deam"/>
    <property type="match status" value="1"/>
</dbReference>
<dbReference type="InterPro" id="IPR000860">
    <property type="entry name" value="HemC"/>
</dbReference>
<dbReference type="InterPro" id="IPR022419">
    <property type="entry name" value="Porphobilin_deaminase_cofac_BS"/>
</dbReference>
<dbReference type="InterPro" id="IPR022417">
    <property type="entry name" value="Porphobilin_deaminase_N"/>
</dbReference>
<dbReference type="InterPro" id="IPR022418">
    <property type="entry name" value="Porphobilinogen_deaminase_C"/>
</dbReference>
<dbReference type="InterPro" id="IPR036803">
    <property type="entry name" value="Porphobilinogen_deaminase_C_sf"/>
</dbReference>
<dbReference type="NCBIfam" id="TIGR00212">
    <property type="entry name" value="hemC"/>
    <property type="match status" value="1"/>
</dbReference>
<dbReference type="PANTHER" id="PTHR11557">
    <property type="entry name" value="PORPHOBILINOGEN DEAMINASE"/>
    <property type="match status" value="1"/>
</dbReference>
<dbReference type="PANTHER" id="PTHR11557:SF0">
    <property type="entry name" value="PORPHOBILINOGEN DEAMINASE"/>
    <property type="match status" value="1"/>
</dbReference>
<dbReference type="Pfam" id="PF01379">
    <property type="entry name" value="Porphobil_deam"/>
    <property type="match status" value="1"/>
</dbReference>
<dbReference type="Pfam" id="PF03900">
    <property type="entry name" value="Porphobil_deamC"/>
    <property type="match status" value="1"/>
</dbReference>
<dbReference type="PIRSF" id="PIRSF001438">
    <property type="entry name" value="4pyrrol_synth_OHMeBilane_synth"/>
    <property type="match status" value="1"/>
</dbReference>
<dbReference type="PRINTS" id="PR00151">
    <property type="entry name" value="PORPHBDMNASE"/>
</dbReference>
<dbReference type="SUPFAM" id="SSF53850">
    <property type="entry name" value="Periplasmic binding protein-like II"/>
    <property type="match status" value="1"/>
</dbReference>
<dbReference type="SUPFAM" id="SSF54782">
    <property type="entry name" value="Porphobilinogen deaminase (hydroxymethylbilane synthase), C-terminal domain"/>
    <property type="match status" value="1"/>
</dbReference>
<dbReference type="PROSITE" id="PS00533">
    <property type="entry name" value="PORPHOBILINOGEN_DEAM"/>
    <property type="match status" value="1"/>
</dbReference>
<sequence>MKQITIASRESKLALWQTNFVKNRIQSELNIPCEISTMKTQGDIILDQPLNKIGGKALFMKELEVAMLSNKADIAVHSLKDVPYQLPQGFCLAGFMPREDPRDAFVSNKYNSIDDLPKGAVVGTSSLRRKAQLLHYRDDLEIRDLRGNIQTRLSKLDNGDYDAIILASAGLIRLELVERITQFIPVEISLPAVGQGIVVIEALERDNDLLEKIQKLNCRESSRVATAERAFNQELKGGCHVAIGAYAELDNNQITLMAMVASSDGKKILKRKMIGDDPTKLGKLLAQEMIALGAYKILES</sequence>
<protein>
    <recommendedName>
        <fullName evidence="1">Porphobilinogen deaminase</fullName>
        <shortName evidence="1">PBG</shortName>
        <ecNumber evidence="1">2.5.1.61</ecNumber>
    </recommendedName>
    <alternativeName>
        <fullName evidence="1">Hydroxymethylbilane synthase</fullName>
        <shortName evidence="1">HMBS</shortName>
    </alternativeName>
    <alternativeName>
        <fullName evidence="1">Pre-uroporphyrinogen synthase</fullName>
    </alternativeName>
</protein>
<name>HEM3_FRATF</name>